<name>VATD_CHLCV</name>
<accession>Q822K0</accession>
<sequence>MSSQIKLTKNAYRLEKVKLSRLETYLPTLKLKKALLQVEVTNAIREASESIQAYEAARESIYAFAELYSVPLYVDAIANSFKIEKVEKDYENITGIEVPVIRNIILAESSYSVLDTPIWIDTLVAYSREFVINKVRSEVAAEKQRILEEELRNVSIRVNLFEKKLIPETTRMIKKIAIFLSDRSITDVGQVKMAKKKIQQRKEESECA</sequence>
<gene>
    <name evidence="1" type="primary">atpD</name>
    <name type="ordered locus">CCA_00682</name>
</gene>
<protein>
    <recommendedName>
        <fullName evidence="1">V-type ATP synthase subunit D</fullName>
    </recommendedName>
    <alternativeName>
        <fullName evidence="1">V-ATPase subunit D</fullName>
    </alternativeName>
</protein>
<keyword id="KW-0066">ATP synthesis</keyword>
<keyword id="KW-0375">Hydrogen ion transport</keyword>
<keyword id="KW-0406">Ion transport</keyword>
<keyword id="KW-0813">Transport</keyword>
<organism>
    <name type="scientific">Chlamydia caviae (strain ATCC VR-813 / DSM 19441 / 03DC25 / GPIC)</name>
    <name type="common">Chlamydophila caviae</name>
    <dbReference type="NCBI Taxonomy" id="227941"/>
    <lineage>
        <taxon>Bacteria</taxon>
        <taxon>Pseudomonadati</taxon>
        <taxon>Chlamydiota</taxon>
        <taxon>Chlamydiia</taxon>
        <taxon>Chlamydiales</taxon>
        <taxon>Chlamydiaceae</taxon>
        <taxon>Chlamydia/Chlamydophila group</taxon>
        <taxon>Chlamydia</taxon>
    </lineage>
</organism>
<comment type="function">
    <text evidence="1">Produces ATP from ADP in the presence of a proton gradient across the membrane.</text>
</comment>
<comment type="similarity">
    <text evidence="1">Belongs to the V-ATPase D subunit family.</text>
</comment>
<proteinExistence type="inferred from homology"/>
<evidence type="ECO:0000255" key="1">
    <source>
        <dbReference type="HAMAP-Rule" id="MF_00271"/>
    </source>
</evidence>
<feature type="chain" id="PRO_1000059148" description="V-type ATP synthase subunit D">
    <location>
        <begin position="1"/>
        <end position="208"/>
    </location>
</feature>
<dbReference type="EMBL" id="AE015925">
    <property type="protein sequence ID" value="AAP05424.1"/>
    <property type="molecule type" value="Genomic_DNA"/>
</dbReference>
<dbReference type="RefSeq" id="WP_011006639.1">
    <property type="nucleotide sequence ID" value="NC_003361.3"/>
</dbReference>
<dbReference type="SMR" id="Q822K0"/>
<dbReference type="STRING" id="227941.CCA_00682"/>
<dbReference type="KEGG" id="cca:CCA_00682"/>
<dbReference type="eggNOG" id="COG1394">
    <property type="taxonomic scope" value="Bacteria"/>
</dbReference>
<dbReference type="HOGENOM" id="CLU_113661_0_0_0"/>
<dbReference type="OrthoDB" id="5637912at2"/>
<dbReference type="Proteomes" id="UP000002193">
    <property type="component" value="Chromosome"/>
</dbReference>
<dbReference type="GO" id="GO:0005524">
    <property type="term" value="F:ATP binding"/>
    <property type="evidence" value="ECO:0007669"/>
    <property type="project" value="UniProtKB-UniRule"/>
</dbReference>
<dbReference type="GO" id="GO:0046933">
    <property type="term" value="F:proton-transporting ATP synthase activity, rotational mechanism"/>
    <property type="evidence" value="ECO:0007669"/>
    <property type="project" value="UniProtKB-UniRule"/>
</dbReference>
<dbReference type="GO" id="GO:0046961">
    <property type="term" value="F:proton-transporting ATPase activity, rotational mechanism"/>
    <property type="evidence" value="ECO:0007669"/>
    <property type="project" value="InterPro"/>
</dbReference>
<dbReference type="GO" id="GO:0042777">
    <property type="term" value="P:proton motive force-driven plasma membrane ATP synthesis"/>
    <property type="evidence" value="ECO:0007669"/>
    <property type="project" value="UniProtKB-UniRule"/>
</dbReference>
<dbReference type="Gene3D" id="1.10.287.3240">
    <property type="match status" value="1"/>
</dbReference>
<dbReference type="HAMAP" id="MF_00271">
    <property type="entry name" value="ATP_synth_D_arch"/>
    <property type="match status" value="1"/>
</dbReference>
<dbReference type="InterPro" id="IPR002699">
    <property type="entry name" value="V_ATPase_D"/>
</dbReference>
<dbReference type="NCBIfam" id="NF002565">
    <property type="entry name" value="PRK02195.1"/>
    <property type="match status" value="1"/>
</dbReference>
<dbReference type="NCBIfam" id="TIGR00309">
    <property type="entry name" value="V_ATPase_subD"/>
    <property type="match status" value="1"/>
</dbReference>
<dbReference type="Pfam" id="PF01813">
    <property type="entry name" value="ATP-synt_D"/>
    <property type="match status" value="1"/>
</dbReference>
<reference key="1">
    <citation type="journal article" date="2003" name="Nucleic Acids Res.">
        <title>Genome sequence of Chlamydophila caviae (Chlamydia psittaci GPIC): examining the role of niche-specific genes in the evolution of the Chlamydiaceae.</title>
        <authorList>
            <person name="Read T.D."/>
            <person name="Myers G.S.A."/>
            <person name="Brunham R.C."/>
            <person name="Nelson W.C."/>
            <person name="Paulsen I.T."/>
            <person name="Heidelberg J.F."/>
            <person name="Holtzapple E.K."/>
            <person name="Khouri H.M."/>
            <person name="Federova N.B."/>
            <person name="Carty H.A."/>
            <person name="Umayam L.A."/>
            <person name="Haft D.H."/>
            <person name="Peterson J.D."/>
            <person name="Beanan M.J."/>
            <person name="White O."/>
            <person name="Salzberg S.L."/>
            <person name="Hsia R.-C."/>
            <person name="McClarty G."/>
            <person name="Rank R.G."/>
            <person name="Bavoil P.M."/>
            <person name="Fraser C.M."/>
        </authorList>
    </citation>
    <scope>NUCLEOTIDE SEQUENCE [LARGE SCALE GENOMIC DNA]</scope>
    <source>
        <strain>ATCC VR-813 / DSM 19441 / 03DC25 / GPIC</strain>
    </source>
</reference>